<gene>
    <name type="primary">WOX7</name>
    <name type="ordered locus">Os01g0667400</name>
    <name type="ordered locus">LOC_Os01g47710</name>
    <name type="ORF">OSJNBb0063G05.20</name>
</gene>
<comment type="function">
    <text evidence="1">Transcription factor which may be involved in developmental processes.</text>
</comment>
<comment type="subcellular location">
    <subcellularLocation>
        <location evidence="2">Nucleus</location>
    </subcellularLocation>
</comment>
<comment type="similarity">
    <text evidence="4">Belongs to the WUS homeobox family.</text>
</comment>
<comment type="sequence caution" evidence="4">
    <conflict type="erroneous gene model prediction">
        <sequence resource="EMBL-CDS" id="BAD73649"/>
    </conflict>
</comment>
<comment type="sequence caution" evidence="4">
    <conflict type="erroneous gene model prediction">
        <sequence resource="EMBL-CDS" id="BAF05722"/>
    </conflict>
</comment>
<reference key="1">
    <citation type="journal article" date="2002" name="Nature">
        <title>The genome sequence and structure of rice chromosome 1.</title>
        <authorList>
            <person name="Sasaki T."/>
            <person name="Matsumoto T."/>
            <person name="Yamamoto K."/>
            <person name="Sakata K."/>
            <person name="Baba T."/>
            <person name="Katayose Y."/>
            <person name="Wu J."/>
            <person name="Niimura Y."/>
            <person name="Cheng Z."/>
            <person name="Nagamura Y."/>
            <person name="Antonio B.A."/>
            <person name="Kanamori H."/>
            <person name="Hosokawa S."/>
            <person name="Masukawa M."/>
            <person name="Arikawa K."/>
            <person name="Chiden Y."/>
            <person name="Hayashi M."/>
            <person name="Okamoto M."/>
            <person name="Ando T."/>
            <person name="Aoki H."/>
            <person name="Arita K."/>
            <person name="Hamada M."/>
            <person name="Harada C."/>
            <person name="Hijishita S."/>
            <person name="Honda M."/>
            <person name="Ichikawa Y."/>
            <person name="Idonuma A."/>
            <person name="Iijima M."/>
            <person name="Ikeda M."/>
            <person name="Ikeno M."/>
            <person name="Ito S."/>
            <person name="Ito T."/>
            <person name="Ito Y."/>
            <person name="Ito Y."/>
            <person name="Iwabuchi A."/>
            <person name="Kamiya K."/>
            <person name="Karasawa W."/>
            <person name="Katagiri S."/>
            <person name="Kikuta A."/>
            <person name="Kobayashi N."/>
            <person name="Kono I."/>
            <person name="Machita K."/>
            <person name="Maehara T."/>
            <person name="Mizuno H."/>
            <person name="Mizubayashi T."/>
            <person name="Mukai Y."/>
            <person name="Nagasaki H."/>
            <person name="Nakashima M."/>
            <person name="Nakama Y."/>
            <person name="Nakamichi Y."/>
            <person name="Nakamura M."/>
            <person name="Namiki N."/>
            <person name="Negishi M."/>
            <person name="Ohta I."/>
            <person name="Ono N."/>
            <person name="Saji S."/>
            <person name="Sakai K."/>
            <person name="Shibata M."/>
            <person name="Shimokawa T."/>
            <person name="Shomura A."/>
            <person name="Song J."/>
            <person name="Takazaki Y."/>
            <person name="Terasawa K."/>
            <person name="Tsuji K."/>
            <person name="Waki K."/>
            <person name="Yamagata H."/>
            <person name="Yamane H."/>
            <person name="Yoshiki S."/>
            <person name="Yoshihara R."/>
            <person name="Yukawa K."/>
            <person name="Zhong H."/>
            <person name="Iwama H."/>
            <person name="Endo T."/>
            <person name="Ito H."/>
            <person name="Hahn J.H."/>
            <person name="Kim H.-I."/>
            <person name="Eun M.-Y."/>
            <person name="Yano M."/>
            <person name="Jiang J."/>
            <person name="Gojobori T."/>
        </authorList>
    </citation>
    <scope>NUCLEOTIDE SEQUENCE [LARGE SCALE GENOMIC DNA]</scope>
    <source>
        <strain>cv. Nipponbare</strain>
    </source>
</reference>
<reference key="2">
    <citation type="journal article" date="2005" name="Nature">
        <title>The map-based sequence of the rice genome.</title>
        <authorList>
            <consortium name="International rice genome sequencing project (IRGSP)"/>
        </authorList>
    </citation>
    <scope>NUCLEOTIDE SEQUENCE [LARGE SCALE GENOMIC DNA]</scope>
    <source>
        <strain>cv. Nipponbare</strain>
    </source>
</reference>
<reference key="3">
    <citation type="journal article" date="2008" name="Nucleic Acids Res.">
        <title>The rice annotation project database (RAP-DB): 2008 update.</title>
        <authorList>
            <consortium name="The rice annotation project (RAP)"/>
        </authorList>
    </citation>
    <scope>GENOME REANNOTATION</scope>
    <source>
        <strain>cv. Nipponbare</strain>
    </source>
</reference>
<reference key="4">
    <citation type="journal article" date="2013" name="Rice">
        <title>Improvement of the Oryza sativa Nipponbare reference genome using next generation sequence and optical map data.</title>
        <authorList>
            <person name="Kawahara Y."/>
            <person name="de la Bastide M."/>
            <person name="Hamilton J.P."/>
            <person name="Kanamori H."/>
            <person name="McCombie W.R."/>
            <person name="Ouyang S."/>
            <person name="Schwartz D.C."/>
            <person name="Tanaka T."/>
            <person name="Wu J."/>
            <person name="Zhou S."/>
            <person name="Childs K.L."/>
            <person name="Davidson R.M."/>
            <person name="Lin H."/>
            <person name="Quesada-Ocampo L."/>
            <person name="Vaillancourt B."/>
            <person name="Sakai H."/>
            <person name="Lee S.S."/>
            <person name="Kim J."/>
            <person name="Numa H."/>
            <person name="Itoh T."/>
            <person name="Buell C.R."/>
            <person name="Matsumoto T."/>
        </authorList>
    </citation>
    <scope>GENOME REANNOTATION</scope>
    <source>
        <strain>cv. Nipponbare</strain>
    </source>
</reference>
<reference key="5">
    <citation type="journal article" date="2007" name="Plant Physiol.">
        <title>A WUSCHEL-LIKE HOMEOBOX gene represses a YABBY gene expression required for rice leaf development.</title>
        <authorList>
            <person name="Dai M."/>
            <person name="Hu Y."/>
            <person name="Zhao Y."/>
            <person name="Liu H."/>
            <person name="Zhou D.-X."/>
        </authorList>
    </citation>
    <scope>NOMENCLATURE</scope>
</reference>
<sequence length="533" mass="54799">MASSNRHWPSMFRSKHATQPWQTQPDMAGSPPSLLSGSSAGSAGGGGYSLKSSPFSSVGEERVPDPKPRWNPRPEQIRILEAIFNSGMVNPPRDEIPRIRMQLQEYGQVGDANVFYWFQNRKSRSKNKLRSGGTGRAGLGLGGNRASAPAAAHREAVAPSFTPPPPILPAPQPVQPQQQLVSPVAAPTSSSSSSSDRSSGSSKPARATSTQAMSVTTAMDLLSPLAAACHQQMLYQGQPLESPPAPAPKVHGIVPHDEPVFLQWPQSPCLSAVDLGAAILGGQYMHLPVPAPQPPSSPGAAGMFWGLCNDVQAPNNTGHKSCAWSAGLGQHWCGSADQLGLGKSSAASIATVSRPEEAHDVDATKHGLLQYGFGITTPQVHVDVTSSAAGVLPPVPSSPSPPNAAVTVASVAATASLTDFAASAISAGAVANNQFQGLADFGLVAGACSGAGAAAAAAAPEAGSSVAAVVCVSVAGAAPPLFYPAAHFNVRHYGDEAELLRYRGGSRTEPVPVDESGVTVEPLQQGAVYIVVM</sequence>
<name>WOX7_ORYSJ</name>
<protein>
    <recommendedName>
        <fullName>WUSCHEL-related homeobox 7</fullName>
    </recommendedName>
    <alternativeName>
        <fullName>OsWOX7</fullName>
    </alternativeName>
</protein>
<accession>Q0JKK6</accession>
<accession>A0A0P0V697</accession>
<accession>Q5QLP9</accession>
<proteinExistence type="evidence at transcript level"/>
<dbReference type="EMBL" id="AP003760">
    <property type="protein sequence ID" value="BAD73649.1"/>
    <property type="status" value="ALT_SEQ"/>
    <property type="molecule type" value="Genomic_DNA"/>
</dbReference>
<dbReference type="EMBL" id="AP008207">
    <property type="protein sequence ID" value="BAF05722.2"/>
    <property type="status" value="ALT_SEQ"/>
    <property type="molecule type" value="Genomic_DNA"/>
</dbReference>
<dbReference type="EMBL" id="AP014957">
    <property type="protein sequence ID" value="BAS73587.1"/>
    <property type="molecule type" value="Genomic_DNA"/>
</dbReference>
<dbReference type="SMR" id="Q0JKK6"/>
<dbReference type="FunCoup" id="Q0JKK6">
    <property type="interactions" value="50"/>
</dbReference>
<dbReference type="STRING" id="39947.Q0JKK6"/>
<dbReference type="PaxDb" id="39947-Q0JKK6"/>
<dbReference type="EnsemblPlants" id="Os01t0667400-02">
    <property type="protein sequence ID" value="Os01t0667400-02"/>
    <property type="gene ID" value="Os01g0667400"/>
</dbReference>
<dbReference type="Gramene" id="Os01t0667400-02">
    <property type="protein sequence ID" value="Os01t0667400-02"/>
    <property type="gene ID" value="Os01g0667400"/>
</dbReference>
<dbReference type="KEGG" id="dosa:Os01g0667400"/>
<dbReference type="eggNOG" id="ENOG502QVSY">
    <property type="taxonomic scope" value="Eukaryota"/>
</dbReference>
<dbReference type="HOGENOM" id="CLU_992410_0_0_1"/>
<dbReference type="InParanoid" id="Q0JKK6"/>
<dbReference type="OrthoDB" id="1935198at2759"/>
<dbReference type="Proteomes" id="UP000000763">
    <property type="component" value="Chromosome 1"/>
</dbReference>
<dbReference type="Proteomes" id="UP000059680">
    <property type="component" value="Chromosome 1"/>
</dbReference>
<dbReference type="ExpressionAtlas" id="Q0JKK6">
    <property type="expression patterns" value="baseline and differential"/>
</dbReference>
<dbReference type="GO" id="GO:0005634">
    <property type="term" value="C:nucleus"/>
    <property type="evidence" value="ECO:0007669"/>
    <property type="project" value="UniProtKB-SubCell"/>
</dbReference>
<dbReference type="GO" id="GO:0003677">
    <property type="term" value="F:DNA binding"/>
    <property type="evidence" value="ECO:0007669"/>
    <property type="project" value="UniProtKB-KW"/>
</dbReference>
<dbReference type="GO" id="GO:0003700">
    <property type="term" value="F:DNA-binding transcription factor activity"/>
    <property type="evidence" value="ECO:0007669"/>
    <property type="project" value="InterPro"/>
</dbReference>
<dbReference type="GO" id="GO:0050793">
    <property type="term" value="P:regulation of developmental process"/>
    <property type="evidence" value="ECO:0007669"/>
    <property type="project" value="InterPro"/>
</dbReference>
<dbReference type="CDD" id="cd00086">
    <property type="entry name" value="homeodomain"/>
    <property type="match status" value="1"/>
</dbReference>
<dbReference type="FunFam" id="1.10.10.60:FF:000118">
    <property type="entry name" value="WUSCHEL-related homeobox 11"/>
    <property type="match status" value="1"/>
</dbReference>
<dbReference type="Gene3D" id="1.10.10.60">
    <property type="entry name" value="Homeodomain-like"/>
    <property type="match status" value="1"/>
</dbReference>
<dbReference type="InterPro" id="IPR001356">
    <property type="entry name" value="HD"/>
</dbReference>
<dbReference type="InterPro" id="IPR009057">
    <property type="entry name" value="Homeodomain-like_sf"/>
</dbReference>
<dbReference type="InterPro" id="IPR044557">
    <property type="entry name" value="WOX8/9-like"/>
</dbReference>
<dbReference type="PANTHER" id="PTHR47288">
    <property type="entry name" value="WUSCHEL-RELATED HOMEOBOX 9"/>
    <property type="match status" value="1"/>
</dbReference>
<dbReference type="PANTHER" id="PTHR47288:SF1">
    <property type="entry name" value="WUSCHEL-RELATED HOMEOBOX 9"/>
    <property type="match status" value="1"/>
</dbReference>
<dbReference type="Pfam" id="PF00046">
    <property type="entry name" value="Homeodomain"/>
    <property type="match status" value="1"/>
</dbReference>
<dbReference type="SMART" id="SM00389">
    <property type="entry name" value="HOX"/>
    <property type="match status" value="1"/>
</dbReference>
<dbReference type="SUPFAM" id="SSF46689">
    <property type="entry name" value="Homeodomain-like"/>
    <property type="match status" value="1"/>
</dbReference>
<dbReference type="PROSITE" id="PS50071">
    <property type="entry name" value="HOMEOBOX_2"/>
    <property type="match status" value="1"/>
</dbReference>
<feature type="chain" id="PRO_0000308644" description="WUSCHEL-related homeobox 7">
    <location>
        <begin position="1"/>
        <end position="533"/>
    </location>
</feature>
<feature type="DNA-binding region" description="Homeobox; WUS-type" evidence="2">
    <location>
        <begin position="65"/>
        <end position="129"/>
    </location>
</feature>
<feature type="region of interest" description="Disordered" evidence="3">
    <location>
        <begin position="1"/>
        <end position="74"/>
    </location>
</feature>
<feature type="region of interest" description="Disordered" evidence="3">
    <location>
        <begin position="125"/>
        <end position="212"/>
    </location>
</feature>
<feature type="compositionally biased region" description="Low complexity" evidence="3">
    <location>
        <begin position="28"/>
        <end position="41"/>
    </location>
</feature>
<feature type="compositionally biased region" description="Basic and acidic residues" evidence="3">
    <location>
        <begin position="59"/>
        <end position="68"/>
    </location>
</feature>
<feature type="compositionally biased region" description="Gly residues" evidence="3">
    <location>
        <begin position="132"/>
        <end position="143"/>
    </location>
</feature>
<feature type="compositionally biased region" description="Pro residues" evidence="3">
    <location>
        <begin position="161"/>
        <end position="174"/>
    </location>
</feature>
<feature type="compositionally biased region" description="Low complexity" evidence="3">
    <location>
        <begin position="175"/>
        <end position="202"/>
    </location>
</feature>
<organism>
    <name type="scientific">Oryza sativa subsp. japonica</name>
    <name type="common">Rice</name>
    <dbReference type="NCBI Taxonomy" id="39947"/>
    <lineage>
        <taxon>Eukaryota</taxon>
        <taxon>Viridiplantae</taxon>
        <taxon>Streptophyta</taxon>
        <taxon>Embryophyta</taxon>
        <taxon>Tracheophyta</taxon>
        <taxon>Spermatophyta</taxon>
        <taxon>Magnoliopsida</taxon>
        <taxon>Liliopsida</taxon>
        <taxon>Poales</taxon>
        <taxon>Poaceae</taxon>
        <taxon>BOP clade</taxon>
        <taxon>Oryzoideae</taxon>
        <taxon>Oryzeae</taxon>
        <taxon>Oryzinae</taxon>
        <taxon>Oryza</taxon>
        <taxon>Oryza sativa</taxon>
    </lineage>
</organism>
<keyword id="KW-0217">Developmental protein</keyword>
<keyword id="KW-0238">DNA-binding</keyword>
<keyword id="KW-0371">Homeobox</keyword>
<keyword id="KW-0539">Nucleus</keyword>
<keyword id="KW-1185">Reference proteome</keyword>
<keyword id="KW-0804">Transcription</keyword>
<keyword id="KW-0805">Transcription regulation</keyword>
<evidence type="ECO:0000250" key="1"/>
<evidence type="ECO:0000255" key="2">
    <source>
        <dbReference type="PROSITE-ProRule" id="PRU00108"/>
    </source>
</evidence>
<evidence type="ECO:0000256" key="3">
    <source>
        <dbReference type="SAM" id="MobiDB-lite"/>
    </source>
</evidence>
<evidence type="ECO:0000305" key="4"/>